<sequence>MEITKEIFSLIAAVMLLLGSFIALISAIGIVKFQDVFLRSHAATKSSTLSVLLTLIGVLIYFIVNTGFFSVRLLLSLVFINLTSPVGMHLVARAAYRNGAYMYRKNDAHTHASILLSSNEQNSTEALQLRAEKREEHRKKWYQND</sequence>
<dbReference type="EMBL" id="CP000255">
    <property type="protein sequence ID" value="ABD20807.1"/>
    <property type="molecule type" value="Genomic_DNA"/>
</dbReference>
<dbReference type="RefSeq" id="WP_000406611.1">
    <property type="nucleotide sequence ID" value="NZ_CP027476.1"/>
</dbReference>
<dbReference type="SMR" id="Q2FJ09"/>
<dbReference type="KEGG" id="saa:SAUSA300_0616"/>
<dbReference type="HOGENOM" id="CLU_121334_0_3_9"/>
<dbReference type="OMA" id="FWIEALV"/>
<dbReference type="Proteomes" id="UP000001939">
    <property type="component" value="Chromosome"/>
</dbReference>
<dbReference type="GO" id="GO:0005886">
    <property type="term" value="C:plasma membrane"/>
    <property type="evidence" value="ECO:0007669"/>
    <property type="project" value="UniProtKB-SubCell"/>
</dbReference>
<dbReference type="GO" id="GO:0015385">
    <property type="term" value="F:sodium:proton antiporter activity"/>
    <property type="evidence" value="ECO:0007669"/>
    <property type="project" value="TreeGrafter"/>
</dbReference>
<dbReference type="InterPro" id="IPR005133">
    <property type="entry name" value="PhaG_MnhG_YufB"/>
</dbReference>
<dbReference type="NCBIfam" id="TIGR01300">
    <property type="entry name" value="CPA3_mnhG_phaG"/>
    <property type="match status" value="1"/>
</dbReference>
<dbReference type="NCBIfam" id="NF009236">
    <property type="entry name" value="PRK12586.1"/>
    <property type="match status" value="1"/>
</dbReference>
<dbReference type="NCBIfam" id="NF009314">
    <property type="entry name" value="PRK12674.1-2"/>
    <property type="match status" value="1"/>
</dbReference>
<dbReference type="PANTHER" id="PTHR34703">
    <property type="entry name" value="ANTIPORTER SUBUNIT MNHG2-RELATED"/>
    <property type="match status" value="1"/>
</dbReference>
<dbReference type="PANTHER" id="PTHR34703:SF1">
    <property type="entry name" value="ANTIPORTER SUBUNIT MNHG2-RELATED"/>
    <property type="match status" value="1"/>
</dbReference>
<dbReference type="Pfam" id="PF03334">
    <property type="entry name" value="PhaG_MnhG_YufB"/>
    <property type="match status" value="1"/>
</dbReference>
<keyword id="KW-0050">Antiport</keyword>
<keyword id="KW-1003">Cell membrane</keyword>
<keyword id="KW-0406">Ion transport</keyword>
<keyword id="KW-0472">Membrane</keyword>
<keyword id="KW-0812">Transmembrane</keyword>
<keyword id="KW-1133">Transmembrane helix</keyword>
<keyword id="KW-0813">Transport</keyword>
<proteinExistence type="inferred from homology"/>
<organism>
    <name type="scientific">Staphylococcus aureus (strain USA300)</name>
    <dbReference type="NCBI Taxonomy" id="367830"/>
    <lineage>
        <taxon>Bacteria</taxon>
        <taxon>Bacillati</taxon>
        <taxon>Bacillota</taxon>
        <taxon>Bacilli</taxon>
        <taxon>Bacillales</taxon>
        <taxon>Staphylococcaceae</taxon>
        <taxon>Staphylococcus</taxon>
    </lineage>
</organism>
<reference key="1">
    <citation type="journal article" date="2006" name="Lancet">
        <title>Complete genome sequence of USA300, an epidemic clone of community-acquired meticillin-resistant Staphylococcus aureus.</title>
        <authorList>
            <person name="Diep B.A."/>
            <person name="Gill S.R."/>
            <person name="Chang R.F."/>
            <person name="Phan T.H."/>
            <person name="Chen J.H."/>
            <person name="Davidson M.G."/>
            <person name="Lin F."/>
            <person name="Lin J."/>
            <person name="Carleton H.A."/>
            <person name="Mongodin E.F."/>
            <person name="Sensabaugh G.F."/>
            <person name="Perdreau-Remington F."/>
        </authorList>
    </citation>
    <scope>NUCLEOTIDE SEQUENCE [LARGE SCALE GENOMIC DNA]</scope>
    <source>
        <strain>USA300</strain>
    </source>
</reference>
<gene>
    <name type="primary">mnhG2</name>
    <name type="synonym">mrpG2</name>
    <name type="ordered locus">SAUSA300_0616</name>
</gene>
<protein>
    <recommendedName>
        <fullName>Putative antiporter subunit mnhG2</fullName>
    </recommendedName>
    <alternativeName>
        <fullName>Mrp complex subunit G2</fullName>
    </alternativeName>
    <alternativeName>
        <fullName>Putative NADH-ubiquinone oxidoreductase subunit mnhF2</fullName>
    </alternativeName>
</protein>
<evidence type="ECO:0000250" key="1"/>
<evidence type="ECO:0000255" key="2"/>
<evidence type="ECO:0000305" key="3"/>
<feature type="chain" id="PRO_0000372185" description="Putative antiporter subunit mnhG2">
    <location>
        <begin position="1"/>
        <end position="145"/>
    </location>
</feature>
<feature type="transmembrane region" description="Helical" evidence="2">
    <location>
        <begin position="11"/>
        <end position="31"/>
    </location>
</feature>
<feature type="transmembrane region" description="Helical" evidence="2">
    <location>
        <begin position="51"/>
        <end position="71"/>
    </location>
</feature>
<feature type="transmembrane region" description="Helical" evidence="2">
    <location>
        <begin position="72"/>
        <end position="92"/>
    </location>
</feature>
<name>MNHG2_STAA3</name>
<comment type="subunit">
    <text evidence="1">May form a heterooligomeric complex that consists of seven subunits: mnhA2, mnhB2, mnhC2, mnhD2, mnhE2, mnhF2 and mnhG2.</text>
</comment>
<comment type="subcellular location">
    <subcellularLocation>
        <location evidence="3">Cell membrane</location>
        <topology evidence="3">Multi-pass membrane protein</topology>
    </subcellularLocation>
</comment>
<comment type="similarity">
    <text evidence="3">Belongs to the CPA3 antiporters (TC 2.A.63) subunit G family.</text>
</comment>
<accession>Q2FJ09</accession>